<reference key="1">
    <citation type="journal article" date="2005" name="Nature">
        <title>The map-based sequence of the rice genome.</title>
        <authorList>
            <consortium name="International rice genome sequencing project (IRGSP)"/>
        </authorList>
    </citation>
    <scope>NUCLEOTIDE SEQUENCE [LARGE SCALE GENOMIC DNA]</scope>
    <source>
        <strain>cv. Nipponbare</strain>
    </source>
</reference>
<reference key="2">
    <citation type="journal article" date="2008" name="Nucleic Acids Res.">
        <title>The rice annotation project database (RAP-DB): 2008 update.</title>
        <authorList>
            <consortium name="The rice annotation project (RAP)"/>
        </authorList>
    </citation>
    <scope>GENOME REANNOTATION</scope>
    <source>
        <strain>cv. Nipponbare</strain>
    </source>
</reference>
<reference key="3">
    <citation type="journal article" date="2013" name="Rice">
        <title>Improvement of the Oryza sativa Nipponbare reference genome using next generation sequence and optical map data.</title>
        <authorList>
            <person name="Kawahara Y."/>
            <person name="de la Bastide M."/>
            <person name="Hamilton J.P."/>
            <person name="Kanamori H."/>
            <person name="McCombie W.R."/>
            <person name="Ouyang S."/>
            <person name="Schwartz D.C."/>
            <person name="Tanaka T."/>
            <person name="Wu J."/>
            <person name="Zhou S."/>
            <person name="Childs K.L."/>
            <person name="Davidson R.M."/>
            <person name="Lin H."/>
            <person name="Quesada-Ocampo L."/>
            <person name="Vaillancourt B."/>
            <person name="Sakai H."/>
            <person name="Lee S.S."/>
            <person name="Kim J."/>
            <person name="Numa H."/>
            <person name="Itoh T."/>
            <person name="Buell C.R."/>
            <person name="Matsumoto T."/>
        </authorList>
    </citation>
    <scope>GENOME REANNOTATION</scope>
    <source>
        <strain>cv. Nipponbare</strain>
    </source>
</reference>
<reference key="4">
    <citation type="journal article" date="2003" name="Science">
        <title>Collection, mapping, and annotation of over 28,000 cDNA clones from japonica rice.</title>
        <authorList>
            <consortium name="The rice full-length cDNA consortium"/>
        </authorList>
    </citation>
    <scope>NUCLEOTIDE SEQUENCE [LARGE SCALE MRNA]</scope>
    <source>
        <strain>cv. Nipponbare</strain>
    </source>
</reference>
<reference key="5">
    <citation type="journal article" date="2008" name="BMC Genomics">
        <title>Genome-wide analysis of CCCH zinc finger family in Arabidopsis and rice.</title>
        <authorList>
            <person name="Wang D."/>
            <person name="Guo Y."/>
            <person name="Wu C."/>
            <person name="Yang G."/>
            <person name="Li Y."/>
            <person name="Zheng C."/>
        </authorList>
    </citation>
    <scope>NOMENCLATURE</scope>
</reference>
<proteinExistence type="evidence at transcript level"/>
<gene>
    <name type="ordered locus">Os02g0793000</name>
    <name type="ordered locus">LOC_Os02g55000</name>
    <name type="ORF">OJ1249_F12.27-1</name>
    <name type="ORF">P0700F06.15-1</name>
</gene>
<keyword id="KW-0175">Coiled coil</keyword>
<keyword id="KW-0238">DNA-binding</keyword>
<keyword id="KW-0479">Metal-binding</keyword>
<keyword id="KW-1185">Reference proteome</keyword>
<keyword id="KW-0862">Zinc</keyword>
<keyword id="KW-0863">Zinc-finger</keyword>
<accession>Q6K687</accession>
<accession>B7EYF2</accession>
<feature type="chain" id="PRO_0000346814" description="Zinc finger CCCH domain-containing protein 18">
    <location>
        <begin position="1"/>
        <end position="504"/>
    </location>
</feature>
<feature type="domain" description="G-patch" evidence="2">
    <location>
        <begin position="304"/>
        <end position="350"/>
    </location>
</feature>
<feature type="zinc finger region" description="C3H1-type" evidence="3">
    <location>
        <begin position="146"/>
        <end position="173"/>
    </location>
</feature>
<feature type="region of interest" description="Disordered" evidence="4">
    <location>
        <begin position="77"/>
        <end position="105"/>
    </location>
</feature>
<feature type="region of interest" description="Disordered" evidence="4">
    <location>
        <begin position="230"/>
        <end position="276"/>
    </location>
</feature>
<feature type="region of interest" description="Disordered" evidence="4">
    <location>
        <begin position="351"/>
        <end position="390"/>
    </location>
</feature>
<feature type="region of interest" description="Disordered" evidence="4">
    <location>
        <begin position="406"/>
        <end position="432"/>
    </location>
</feature>
<feature type="region of interest" description="Disordered" evidence="4">
    <location>
        <begin position="482"/>
        <end position="504"/>
    </location>
</feature>
<feature type="coiled-coil region" evidence="1">
    <location>
        <begin position="40"/>
        <end position="69"/>
    </location>
</feature>
<feature type="coiled-coil region" evidence="1">
    <location>
        <begin position="430"/>
        <end position="500"/>
    </location>
</feature>
<feature type="compositionally biased region" description="Acidic residues" evidence="4">
    <location>
        <begin position="94"/>
        <end position="104"/>
    </location>
</feature>
<feature type="compositionally biased region" description="Acidic residues" evidence="4">
    <location>
        <begin position="245"/>
        <end position="254"/>
    </location>
</feature>
<feature type="compositionally biased region" description="Acidic residues" evidence="4">
    <location>
        <begin position="260"/>
        <end position="272"/>
    </location>
</feature>
<feature type="compositionally biased region" description="Basic residues" evidence="4">
    <location>
        <begin position="361"/>
        <end position="374"/>
    </location>
</feature>
<feature type="compositionally biased region" description="Basic and acidic residues" evidence="4">
    <location>
        <begin position="375"/>
        <end position="390"/>
    </location>
</feature>
<feature type="compositionally biased region" description="Basic and acidic residues" evidence="4">
    <location>
        <begin position="413"/>
        <end position="432"/>
    </location>
</feature>
<feature type="compositionally biased region" description="Basic and acidic residues" evidence="4">
    <location>
        <begin position="493"/>
        <end position="504"/>
    </location>
</feature>
<sequence length="504" mass="55623">MAGEEGEDEAASIELQLEHHLQEQRASLTAVDEALAADPSNADLLEVHEELLAAIKDAEEGLLHLKRSRLVKQIDEIFPNQEPTSEAPEVAVDPPDDVEPEPLEPQEFSVGSKCRFRHKDGRWYNGCVIGLEGSSDARISFLTPTSENMSMCKFFLQQRCRFGSNCRLSHGIVIPILSLKQFTPTRWQQSLVGSSILAASGHHSGLWRRAELESWDDDLKVGQVVFQDDGSSARLPSDSLSISEYADESDEDGEGSSSDEGSDFSEDGDQEDESVHQGLGLLESKNLSGVQTETAIFAKWEHHTRGVASKMMAKMGYREGMGLGVSGQGMLDPIPVKVLPPKQSLDHAVAASEVNDSVGPGKKRSRGGKRKREKKFAEQARAAKAEEEERSVFSFINSQLVGQDVAEGSAVKSKKDSSGEANGHAKKEDRRSLLAYDDEVKELRSRVEKLEEMMKRNRKDKAFYEAASKKLKQTRKALADAEATHASATNAVARKEKEKKWLKF</sequence>
<protein>
    <recommendedName>
        <fullName>Zinc finger CCCH domain-containing protein 18</fullName>
        <shortName>OsC3H18</shortName>
    </recommendedName>
</protein>
<organism>
    <name type="scientific">Oryza sativa subsp. japonica</name>
    <name type="common">Rice</name>
    <dbReference type="NCBI Taxonomy" id="39947"/>
    <lineage>
        <taxon>Eukaryota</taxon>
        <taxon>Viridiplantae</taxon>
        <taxon>Streptophyta</taxon>
        <taxon>Embryophyta</taxon>
        <taxon>Tracheophyta</taxon>
        <taxon>Spermatophyta</taxon>
        <taxon>Magnoliopsida</taxon>
        <taxon>Liliopsida</taxon>
        <taxon>Poales</taxon>
        <taxon>Poaceae</taxon>
        <taxon>BOP clade</taxon>
        <taxon>Oryzoideae</taxon>
        <taxon>Oryzeae</taxon>
        <taxon>Oryzinae</taxon>
        <taxon>Oryza</taxon>
        <taxon>Oryza sativa</taxon>
    </lineage>
</organism>
<name>C3H18_ORYSJ</name>
<dbReference type="EMBL" id="AP004054">
    <property type="protein sequence ID" value="BAD19187.1"/>
    <property type="molecule type" value="Genomic_DNA"/>
</dbReference>
<dbReference type="EMBL" id="AP005115">
    <property type="protein sequence ID" value="BAD19655.1"/>
    <property type="molecule type" value="Genomic_DNA"/>
</dbReference>
<dbReference type="EMBL" id="AP008208">
    <property type="protein sequence ID" value="BAF10279.1"/>
    <property type="molecule type" value="Genomic_DNA"/>
</dbReference>
<dbReference type="EMBL" id="AP014958">
    <property type="protein sequence ID" value="BAS81329.1"/>
    <property type="molecule type" value="Genomic_DNA"/>
</dbReference>
<dbReference type="EMBL" id="AK105863">
    <property type="protein sequence ID" value="BAG97399.1"/>
    <property type="molecule type" value="mRNA"/>
</dbReference>
<dbReference type="RefSeq" id="XP_015622844.1">
    <property type="nucleotide sequence ID" value="XM_015767358.1"/>
</dbReference>
<dbReference type="SMR" id="Q6K687"/>
<dbReference type="FunCoup" id="Q6K687">
    <property type="interactions" value="1202"/>
</dbReference>
<dbReference type="STRING" id="39947.Q6K687"/>
<dbReference type="PaxDb" id="39947-Q6K687"/>
<dbReference type="EnsemblPlants" id="Os02t0793000-01">
    <property type="protein sequence ID" value="Os02t0793000-01"/>
    <property type="gene ID" value="Os02g0793000"/>
</dbReference>
<dbReference type="Gramene" id="Os02t0793000-01">
    <property type="protein sequence ID" value="Os02t0793000-01"/>
    <property type="gene ID" value="Os02g0793000"/>
</dbReference>
<dbReference type="KEGG" id="dosa:Os02g0793000"/>
<dbReference type="eggNOG" id="KOG2185">
    <property type="taxonomic scope" value="Eukaryota"/>
</dbReference>
<dbReference type="HOGENOM" id="CLU_043217_0_0_1"/>
<dbReference type="InParanoid" id="Q6K687"/>
<dbReference type="OMA" id="QYTRGIG"/>
<dbReference type="OrthoDB" id="4822at2759"/>
<dbReference type="Proteomes" id="UP000000763">
    <property type="component" value="Chromosome 2"/>
</dbReference>
<dbReference type="Proteomes" id="UP000059680">
    <property type="component" value="Chromosome 2"/>
</dbReference>
<dbReference type="ExpressionAtlas" id="Q6K687">
    <property type="expression patterns" value="baseline and differential"/>
</dbReference>
<dbReference type="GO" id="GO:0003677">
    <property type="term" value="F:DNA binding"/>
    <property type="evidence" value="ECO:0007669"/>
    <property type="project" value="UniProtKB-KW"/>
</dbReference>
<dbReference type="GO" id="GO:0008270">
    <property type="term" value="F:zinc ion binding"/>
    <property type="evidence" value="ECO:0007669"/>
    <property type="project" value="UniProtKB-KW"/>
</dbReference>
<dbReference type="Gene3D" id="2.30.30.1190">
    <property type="match status" value="1"/>
</dbReference>
<dbReference type="InterPro" id="IPR000467">
    <property type="entry name" value="G_patch_dom"/>
</dbReference>
<dbReference type="InterPro" id="IPR041367">
    <property type="entry name" value="Znf-CCCH_4"/>
</dbReference>
<dbReference type="InterPro" id="IPR000571">
    <property type="entry name" value="Znf_CCCH"/>
</dbReference>
<dbReference type="InterPro" id="IPR036855">
    <property type="entry name" value="Znf_CCCH_sf"/>
</dbReference>
<dbReference type="PANTHER" id="PTHR47650">
    <property type="entry name" value="ZINC FINGER CCCH DOMAIN-CONTAINING PROTEIN 22"/>
    <property type="match status" value="1"/>
</dbReference>
<dbReference type="PANTHER" id="PTHR47650:SF2">
    <property type="entry name" value="ZINC FINGER CCCH DOMAIN-CONTAINING PROTEIN 22"/>
    <property type="match status" value="1"/>
</dbReference>
<dbReference type="Pfam" id="PF01585">
    <property type="entry name" value="G-patch"/>
    <property type="match status" value="1"/>
</dbReference>
<dbReference type="Pfam" id="PF18044">
    <property type="entry name" value="zf-CCCH_4"/>
    <property type="match status" value="1"/>
</dbReference>
<dbReference type="SMART" id="SM00443">
    <property type="entry name" value="G_patch"/>
    <property type="match status" value="1"/>
</dbReference>
<dbReference type="SMART" id="SM00356">
    <property type="entry name" value="ZnF_C3H1"/>
    <property type="match status" value="1"/>
</dbReference>
<dbReference type="SUPFAM" id="SSF90229">
    <property type="entry name" value="CCCH zinc finger"/>
    <property type="match status" value="1"/>
</dbReference>
<dbReference type="PROSITE" id="PS50174">
    <property type="entry name" value="G_PATCH"/>
    <property type="match status" value="1"/>
</dbReference>
<dbReference type="PROSITE" id="PS50103">
    <property type="entry name" value="ZF_C3H1"/>
    <property type="match status" value="1"/>
</dbReference>
<evidence type="ECO:0000255" key="1"/>
<evidence type="ECO:0000255" key="2">
    <source>
        <dbReference type="PROSITE-ProRule" id="PRU00092"/>
    </source>
</evidence>
<evidence type="ECO:0000255" key="3">
    <source>
        <dbReference type="PROSITE-ProRule" id="PRU00723"/>
    </source>
</evidence>
<evidence type="ECO:0000256" key="4">
    <source>
        <dbReference type="SAM" id="MobiDB-lite"/>
    </source>
</evidence>